<feature type="chain" id="PRO_1000021886" description="Homoserine O-acetyltransferase">
    <location>
        <begin position="1"/>
        <end position="373"/>
    </location>
</feature>
<feature type="domain" description="AB hydrolase-1" evidence="1">
    <location>
        <begin position="52"/>
        <end position="356"/>
    </location>
</feature>
<feature type="active site" description="Nucleophile" evidence="1">
    <location>
        <position position="157"/>
    </location>
</feature>
<feature type="active site" evidence="1">
    <location>
        <position position="320"/>
    </location>
</feature>
<feature type="active site" evidence="1">
    <location>
        <position position="350"/>
    </location>
</feature>
<feature type="binding site" evidence="1">
    <location>
        <position position="227"/>
    </location>
    <ligand>
        <name>substrate</name>
    </ligand>
</feature>
<feature type="binding site" evidence="1">
    <location>
        <position position="351"/>
    </location>
    <ligand>
        <name>substrate</name>
    </ligand>
</feature>
<name>METXA_MYCSK</name>
<gene>
    <name evidence="1" type="primary">metXA</name>
    <name type="ordered locus">Mkms_1224</name>
</gene>
<evidence type="ECO:0000255" key="1">
    <source>
        <dbReference type="HAMAP-Rule" id="MF_00296"/>
    </source>
</evidence>
<proteinExistence type="inferred from homology"/>
<accession>A1UC78</accession>
<sequence>MKSPAVPALDLPAEGETGVVDIGPLTLESGAVIDDVSIAVQRWGELSPNRDNVVMVLHALTGDSHVTGPAGPDHPTPGWWDGVAGPGAPIDTDRWCAVSTNVLGGCRGSTGPSSIAPDGRPYGSRFPAVTIRDQVTADLAALEALGITEVAAVVGGSMGGARALEWIVGHPATVRSALILAVGARATADQIGTQSTQVAAIKADPDWCGGDYHDTGRVPSTGLAIARRFAHLTYRGEVELDDRFGNHAQGDESPTDGGRYAVQSYLEYQGAKLVERFDAGTYVTLTDALSSHDVGRGRGGVRAALQGCRVPTIVGGVTSDRLYPLRLQQELAELLPGCTGLDVVDSVYGHDGFLVETEAVGKLIRRTLELAER</sequence>
<comment type="function">
    <text evidence="1">Transfers an acetyl group from acetyl-CoA to L-homoserine, forming acetyl-L-homoserine.</text>
</comment>
<comment type="catalytic activity">
    <reaction evidence="1">
        <text>L-homoserine + acetyl-CoA = O-acetyl-L-homoserine + CoA</text>
        <dbReference type="Rhea" id="RHEA:13701"/>
        <dbReference type="ChEBI" id="CHEBI:57287"/>
        <dbReference type="ChEBI" id="CHEBI:57288"/>
        <dbReference type="ChEBI" id="CHEBI:57476"/>
        <dbReference type="ChEBI" id="CHEBI:57716"/>
        <dbReference type="EC" id="2.3.1.31"/>
    </reaction>
</comment>
<comment type="pathway">
    <text evidence="1">Amino-acid biosynthesis; L-methionine biosynthesis via de novo pathway; O-acetyl-L-homoserine from L-homoserine: step 1/1.</text>
</comment>
<comment type="subunit">
    <text evidence="1">Homodimer.</text>
</comment>
<comment type="subcellular location">
    <subcellularLocation>
        <location evidence="1">Cytoplasm</location>
    </subcellularLocation>
</comment>
<comment type="similarity">
    <text evidence="1">Belongs to the AB hydrolase superfamily. MetX family.</text>
</comment>
<organism>
    <name type="scientific">Mycobacterium sp. (strain KMS)</name>
    <dbReference type="NCBI Taxonomy" id="189918"/>
    <lineage>
        <taxon>Bacteria</taxon>
        <taxon>Bacillati</taxon>
        <taxon>Actinomycetota</taxon>
        <taxon>Actinomycetes</taxon>
        <taxon>Mycobacteriales</taxon>
        <taxon>Mycobacteriaceae</taxon>
        <taxon>Mycobacterium</taxon>
    </lineage>
</organism>
<reference key="1">
    <citation type="submission" date="2006-12" db="EMBL/GenBank/DDBJ databases">
        <title>Complete sequence of chromosome of Mycobacterium sp. KMS.</title>
        <authorList>
            <consortium name="US DOE Joint Genome Institute"/>
            <person name="Copeland A."/>
            <person name="Lucas S."/>
            <person name="Lapidus A."/>
            <person name="Barry K."/>
            <person name="Detter J.C."/>
            <person name="Glavina del Rio T."/>
            <person name="Hammon N."/>
            <person name="Israni S."/>
            <person name="Dalin E."/>
            <person name="Tice H."/>
            <person name="Pitluck S."/>
            <person name="Kiss H."/>
            <person name="Brettin T."/>
            <person name="Bruce D."/>
            <person name="Han C."/>
            <person name="Tapia R."/>
            <person name="Gilna P."/>
            <person name="Schmutz J."/>
            <person name="Larimer F."/>
            <person name="Land M."/>
            <person name="Hauser L."/>
            <person name="Kyrpides N."/>
            <person name="Mikhailova N."/>
            <person name="Miller C.D."/>
            <person name="Richardson P."/>
        </authorList>
    </citation>
    <scope>NUCLEOTIDE SEQUENCE [LARGE SCALE GENOMIC DNA]</scope>
    <source>
        <strain>KMS</strain>
    </source>
</reference>
<protein>
    <recommendedName>
        <fullName evidence="1">Homoserine O-acetyltransferase</fullName>
        <shortName evidence="1">HAT</shortName>
        <ecNumber evidence="1">2.3.1.31</ecNumber>
    </recommendedName>
    <alternativeName>
        <fullName evidence="1">Homoserine transacetylase</fullName>
        <shortName evidence="1">HTA</shortName>
    </alternativeName>
</protein>
<keyword id="KW-0012">Acyltransferase</keyword>
<keyword id="KW-0028">Amino-acid biosynthesis</keyword>
<keyword id="KW-0963">Cytoplasm</keyword>
<keyword id="KW-0486">Methionine biosynthesis</keyword>
<keyword id="KW-0808">Transferase</keyword>
<dbReference type="EC" id="2.3.1.31" evidence="1"/>
<dbReference type="EMBL" id="CP000518">
    <property type="protein sequence ID" value="ABL90436.1"/>
    <property type="molecule type" value="Genomic_DNA"/>
</dbReference>
<dbReference type="SMR" id="A1UC78"/>
<dbReference type="STRING" id="189918.Mkms_1224"/>
<dbReference type="ESTHER" id="mycsk-metx">
    <property type="family name" value="Homoserine_transacetylase"/>
</dbReference>
<dbReference type="KEGG" id="mkm:Mkms_1224"/>
<dbReference type="HOGENOM" id="CLU_028760_1_0_11"/>
<dbReference type="OrthoDB" id="9800754at2"/>
<dbReference type="UniPathway" id="UPA00051">
    <property type="reaction ID" value="UER00074"/>
</dbReference>
<dbReference type="GO" id="GO:0005737">
    <property type="term" value="C:cytoplasm"/>
    <property type="evidence" value="ECO:0007669"/>
    <property type="project" value="UniProtKB-SubCell"/>
</dbReference>
<dbReference type="GO" id="GO:0004414">
    <property type="term" value="F:homoserine O-acetyltransferase activity"/>
    <property type="evidence" value="ECO:0007669"/>
    <property type="project" value="UniProtKB-UniRule"/>
</dbReference>
<dbReference type="GO" id="GO:0009092">
    <property type="term" value="P:homoserine metabolic process"/>
    <property type="evidence" value="ECO:0007669"/>
    <property type="project" value="TreeGrafter"/>
</dbReference>
<dbReference type="GO" id="GO:0009086">
    <property type="term" value="P:methionine biosynthetic process"/>
    <property type="evidence" value="ECO:0007669"/>
    <property type="project" value="UniProtKB-UniRule"/>
</dbReference>
<dbReference type="Gene3D" id="3.40.50.1820">
    <property type="entry name" value="alpha/beta hydrolase"/>
    <property type="match status" value="1"/>
</dbReference>
<dbReference type="HAMAP" id="MF_00296">
    <property type="entry name" value="MetX_acyltransf"/>
    <property type="match status" value="1"/>
</dbReference>
<dbReference type="InterPro" id="IPR000073">
    <property type="entry name" value="AB_hydrolase_1"/>
</dbReference>
<dbReference type="InterPro" id="IPR029058">
    <property type="entry name" value="AB_hydrolase_fold"/>
</dbReference>
<dbReference type="InterPro" id="IPR008220">
    <property type="entry name" value="HAT_MetX-like"/>
</dbReference>
<dbReference type="NCBIfam" id="TIGR01392">
    <property type="entry name" value="homoserO_Ac_trn"/>
    <property type="match status" value="1"/>
</dbReference>
<dbReference type="NCBIfam" id="NF001209">
    <property type="entry name" value="PRK00175.1"/>
    <property type="match status" value="1"/>
</dbReference>
<dbReference type="PANTHER" id="PTHR32268">
    <property type="entry name" value="HOMOSERINE O-ACETYLTRANSFERASE"/>
    <property type="match status" value="1"/>
</dbReference>
<dbReference type="PANTHER" id="PTHR32268:SF11">
    <property type="entry name" value="HOMOSERINE O-ACETYLTRANSFERASE"/>
    <property type="match status" value="1"/>
</dbReference>
<dbReference type="Pfam" id="PF00561">
    <property type="entry name" value="Abhydrolase_1"/>
    <property type="match status" value="1"/>
</dbReference>
<dbReference type="PIRSF" id="PIRSF000443">
    <property type="entry name" value="Homoser_Ac_trans"/>
    <property type="match status" value="1"/>
</dbReference>
<dbReference type="SUPFAM" id="SSF53474">
    <property type="entry name" value="alpha/beta-Hydrolases"/>
    <property type="match status" value="1"/>
</dbReference>